<proteinExistence type="evidence at transcript level"/>
<comment type="similarity">
    <text evidence="4">Belongs to the RUNDC3 family.</text>
</comment>
<evidence type="ECO:0000255" key="1"/>
<evidence type="ECO:0000255" key="2">
    <source>
        <dbReference type="PROSITE-ProRule" id="PRU00178"/>
    </source>
</evidence>
<evidence type="ECO:0000256" key="3">
    <source>
        <dbReference type="SAM" id="MobiDB-lite"/>
    </source>
</evidence>
<evidence type="ECO:0000305" key="4"/>
<gene>
    <name type="primary">rundc3a</name>
</gene>
<name>RUN3A_XENTR</name>
<reference key="1">
    <citation type="submission" date="2006-08" db="EMBL/GenBank/DDBJ databases">
        <authorList>
            <consortium name="NIH - Xenopus Gene Collection (XGC) project"/>
        </authorList>
    </citation>
    <scope>NUCLEOTIDE SEQUENCE [LARGE SCALE MRNA]</scope>
    <source>
        <tissue>Brain</tissue>
    </source>
</reference>
<keyword id="KW-0175">Coiled coil</keyword>
<keyword id="KW-1185">Reference proteome</keyword>
<organism>
    <name type="scientific">Xenopus tropicalis</name>
    <name type="common">Western clawed frog</name>
    <name type="synonym">Silurana tropicalis</name>
    <dbReference type="NCBI Taxonomy" id="8364"/>
    <lineage>
        <taxon>Eukaryota</taxon>
        <taxon>Metazoa</taxon>
        <taxon>Chordata</taxon>
        <taxon>Craniata</taxon>
        <taxon>Vertebrata</taxon>
        <taxon>Euteleostomi</taxon>
        <taxon>Amphibia</taxon>
        <taxon>Batrachia</taxon>
        <taxon>Anura</taxon>
        <taxon>Pipoidea</taxon>
        <taxon>Pipidae</taxon>
        <taxon>Xenopodinae</taxon>
        <taxon>Xenopus</taxon>
        <taxon>Silurana</taxon>
    </lineage>
</organism>
<dbReference type="EMBL" id="BC121377">
    <property type="protein sequence ID" value="AAI21378.1"/>
    <property type="molecule type" value="mRNA"/>
</dbReference>
<dbReference type="RefSeq" id="NP_001072911.1">
    <property type="nucleotide sequence ID" value="NM_001079443.1"/>
</dbReference>
<dbReference type="SMR" id="Q0V9V7"/>
<dbReference type="FunCoup" id="Q0V9V7">
    <property type="interactions" value="904"/>
</dbReference>
<dbReference type="STRING" id="8364.ENSXETP00000024766"/>
<dbReference type="PaxDb" id="8364-ENSXETP00000016042"/>
<dbReference type="DNASU" id="780373"/>
<dbReference type="GeneID" id="780373"/>
<dbReference type="KEGG" id="xtr:780373"/>
<dbReference type="AGR" id="Xenbase:XB-GENE-1003170"/>
<dbReference type="CTD" id="10900"/>
<dbReference type="Xenbase" id="XB-GENE-1003170">
    <property type="gene designation" value="rundc3a"/>
</dbReference>
<dbReference type="eggNOG" id="KOG4381">
    <property type="taxonomic scope" value="Eukaryota"/>
</dbReference>
<dbReference type="HOGENOM" id="CLU_045987_0_0_1"/>
<dbReference type="InParanoid" id="Q0V9V7"/>
<dbReference type="OMA" id="FWEYVRL"/>
<dbReference type="OrthoDB" id="10029904at2759"/>
<dbReference type="PhylomeDB" id="Q0V9V7"/>
<dbReference type="TreeFam" id="TF323904"/>
<dbReference type="Proteomes" id="UP000008143">
    <property type="component" value="Chromosome 10"/>
</dbReference>
<dbReference type="Bgee" id="ENSXETG00000007363">
    <property type="expression patterns" value="Expressed in brain and 9 other cell types or tissues"/>
</dbReference>
<dbReference type="CDD" id="cd17699">
    <property type="entry name" value="RUN_RUNDC3A"/>
    <property type="match status" value="1"/>
</dbReference>
<dbReference type="FunFam" id="1.20.58.900:FF:000005">
    <property type="entry name" value="RUN domain-containing protein 3A isoform X1"/>
    <property type="match status" value="1"/>
</dbReference>
<dbReference type="Gene3D" id="1.20.58.900">
    <property type="match status" value="1"/>
</dbReference>
<dbReference type="InterPro" id="IPR004012">
    <property type="entry name" value="Run_dom"/>
</dbReference>
<dbReference type="InterPro" id="IPR037213">
    <property type="entry name" value="Run_dom_sf"/>
</dbReference>
<dbReference type="InterPro" id="IPR047338">
    <property type="entry name" value="RUN_RUNDC3A"/>
</dbReference>
<dbReference type="InterPro" id="IPR047340">
    <property type="entry name" value="RUNDC3A_B"/>
</dbReference>
<dbReference type="PANTHER" id="PTHR46251">
    <property type="entry name" value="RUN DOMAIN-CONTAINING 3 PROTEIN RUNDC3"/>
    <property type="match status" value="1"/>
</dbReference>
<dbReference type="PANTHER" id="PTHR46251:SF4">
    <property type="entry name" value="RUN DOMAIN-CONTAINING PROTEIN 3A"/>
    <property type="match status" value="1"/>
</dbReference>
<dbReference type="Pfam" id="PF02759">
    <property type="entry name" value="RUN"/>
    <property type="match status" value="1"/>
</dbReference>
<dbReference type="SMART" id="SM00593">
    <property type="entry name" value="RUN"/>
    <property type="match status" value="1"/>
</dbReference>
<dbReference type="SUPFAM" id="SSF140741">
    <property type="entry name" value="RUN domain-like"/>
    <property type="match status" value="1"/>
</dbReference>
<dbReference type="PROSITE" id="PS50826">
    <property type="entry name" value="RUN"/>
    <property type="match status" value="1"/>
</dbReference>
<sequence length="440" mass="49314">MEPSFIQSAMALGLPSKKASSRNIAVERKNLLTVCRFSVKTLLEKYTAEPIDDSSEEFVNFAAILEHILSHRFKGHVSWFSTDGQRGFWDYIRIACSKVTNNCISSIENMENISSARAKGRAWIRLALMEKRLSEYIVTALRDTRTTRRFYDDGAILLREESSVLTGMLIGLSAIDFSFCLKGEGIDGKTPAVIDYTPYLKFTQSYDYLSEEDDRESVGGSSSEDSSPEHPYLPLLTDEESWYSKWRKMEQKFRIVYAQKGYLEELVRLRETQLKNLEAENKRLTQRISEQAEQSLQEKHQLEGVILELQEQLTGLLPSETAPIKQFTPSLGAPLVNQWPSLSTLNDNEAPVNPSLYRRHSFLSTEHLSAELSLSSESQRLDGKQDGEPWGPIGKDPTPSMLGLCGSLASIPSCKSLPSLKSNECLVSNSSETSPTGSPS</sequence>
<accession>Q0V9V7</accession>
<protein>
    <recommendedName>
        <fullName>RUN domain-containing protein 3A</fullName>
    </recommendedName>
</protein>
<feature type="chain" id="PRO_0000324159" description="RUN domain-containing protein 3A">
    <location>
        <begin position="1"/>
        <end position="440"/>
    </location>
</feature>
<feature type="domain" description="RUN" evidence="2">
    <location>
        <begin position="52"/>
        <end position="184"/>
    </location>
</feature>
<feature type="region of interest" description="Disordered" evidence="3">
    <location>
        <begin position="213"/>
        <end position="233"/>
    </location>
</feature>
<feature type="region of interest" description="Disordered" evidence="3">
    <location>
        <begin position="374"/>
        <end position="402"/>
    </location>
</feature>
<feature type="coiled-coil region" evidence="1">
    <location>
        <begin position="262"/>
        <end position="317"/>
    </location>
</feature>